<keyword id="KW-0687">Ribonucleoprotein</keyword>
<keyword id="KW-0689">Ribosomal protein</keyword>
<evidence type="ECO:0000255" key="1">
    <source>
        <dbReference type="HAMAP-Rule" id="MF_00508"/>
    </source>
</evidence>
<evidence type="ECO:0000305" key="2"/>
<accession>Q1MIE2</accession>
<gene>
    <name evidence="1" type="primary">rpsJ</name>
    <name type="ordered locus">RL1773</name>
</gene>
<dbReference type="EMBL" id="AM236080">
    <property type="protein sequence ID" value="CAK07268.1"/>
    <property type="molecule type" value="Genomic_DNA"/>
</dbReference>
<dbReference type="RefSeq" id="WP_003547547.1">
    <property type="nucleotide sequence ID" value="NC_008380.1"/>
</dbReference>
<dbReference type="SMR" id="Q1MIE2"/>
<dbReference type="EnsemblBacteria" id="CAK07268">
    <property type="protein sequence ID" value="CAK07268"/>
    <property type="gene ID" value="RL1773"/>
</dbReference>
<dbReference type="GeneID" id="91148127"/>
<dbReference type="KEGG" id="rle:RL1773"/>
<dbReference type="eggNOG" id="COG0051">
    <property type="taxonomic scope" value="Bacteria"/>
</dbReference>
<dbReference type="HOGENOM" id="CLU_122625_1_3_5"/>
<dbReference type="Proteomes" id="UP000006575">
    <property type="component" value="Chromosome"/>
</dbReference>
<dbReference type="GO" id="GO:1990904">
    <property type="term" value="C:ribonucleoprotein complex"/>
    <property type="evidence" value="ECO:0007669"/>
    <property type="project" value="UniProtKB-KW"/>
</dbReference>
<dbReference type="GO" id="GO:0005840">
    <property type="term" value="C:ribosome"/>
    <property type="evidence" value="ECO:0007669"/>
    <property type="project" value="UniProtKB-KW"/>
</dbReference>
<dbReference type="GO" id="GO:0003735">
    <property type="term" value="F:structural constituent of ribosome"/>
    <property type="evidence" value="ECO:0007669"/>
    <property type="project" value="InterPro"/>
</dbReference>
<dbReference type="GO" id="GO:0000049">
    <property type="term" value="F:tRNA binding"/>
    <property type="evidence" value="ECO:0007669"/>
    <property type="project" value="UniProtKB-UniRule"/>
</dbReference>
<dbReference type="GO" id="GO:0006412">
    <property type="term" value="P:translation"/>
    <property type="evidence" value="ECO:0007669"/>
    <property type="project" value="UniProtKB-UniRule"/>
</dbReference>
<dbReference type="FunFam" id="3.30.70.600:FF:000001">
    <property type="entry name" value="30S ribosomal protein S10"/>
    <property type="match status" value="1"/>
</dbReference>
<dbReference type="Gene3D" id="3.30.70.600">
    <property type="entry name" value="Ribosomal protein S10 domain"/>
    <property type="match status" value="1"/>
</dbReference>
<dbReference type="HAMAP" id="MF_00508">
    <property type="entry name" value="Ribosomal_uS10"/>
    <property type="match status" value="1"/>
</dbReference>
<dbReference type="InterPro" id="IPR001848">
    <property type="entry name" value="Ribosomal_uS10"/>
</dbReference>
<dbReference type="InterPro" id="IPR018268">
    <property type="entry name" value="Ribosomal_uS10_CS"/>
</dbReference>
<dbReference type="InterPro" id="IPR027486">
    <property type="entry name" value="Ribosomal_uS10_dom"/>
</dbReference>
<dbReference type="InterPro" id="IPR036838">
    <property type="entry name" value="Ribosomal_uS10_dom_sf"/>
</dbReference>
<dbReference type="NCBIfam" id="NF001861">
    <property type="entry name" value="PRK00596.1"/>
    <property type="match status" value="1"/>
</dbReference>
<dbReference type="NCBIfam" id="TIGR01049">
    <property type="entry name" value="rpsJ_bact"/>
    <property type="match status" value="1"/>
</dbReference>
<dbReference type="PANTHER" id="PTHR11700">
    <property type="entry name" value="30S RIBOSOMAL PROTEIN S10 FAMILY MEMBER"/>
    <property type="match status" value="1"/>
</dbReference>
<dbReference type="Pfam" id="PF00338">
    <property type="entry name" value="Ribosomal_S10"/>
    <property type="match status" value="1"/>
</dbReference>
<dbReference type="PRINTS" id="PR00971">
    <property type="entry name" value="RIBOSOMALS10"/>
</dbReference>
<dbReference type="SMART" id="SM01403">
    <property type="entry name" value="Ribosomal_S10"/>
    <property type="match status" value="1"/>
</dbReference>
<dbReference type="SUPFAM" id="SSF54999">
    <property type="entry name" value="Ribosomal protein S10"/>
    <property type="match status" value="1"/>
</dbReference>
<dbReference type="PROSITE" id="PS00361">
    <property type="entry name" value="RIBOSOMAL_S10"/>
    <property type="match status" value="1"/>
</dbReference>
<proteinExistence type="inferred from homology"/>
<comment type="function">
    <text evidence="1">Involved in the binding of tRNA to the ribosomes.</text>
</comment>
<comment type="subunit">
    <text evidence="1">Part of the 30S ribosomal subunit.</text>
</comment>
<comment type="similarity">
    <text evidence="1">Belongs to the universal ribosomal protein uS10 family.</text>
</comment>
<organism>
    <name type="scientific">Rhizobium johnstonii (strain DSM 114642 / LMG 32736 / 3841)</name>
    <name type="common">Rhizobium leguminosarum bv. viciae</name>
    <dbReference type="NCBI Taxonomy" id="216596"/>
    <lineage>
        <taxon>Bacteria</taxon>
        <taxon>Pseudomonadati</taxon>
        <taxon>Pseudomonadota</taxon>
        <taxon>Alphaproteobacteria</taxon>
        <taxon>Hyphomicrobiales</taxon>
        <taxon>Rhizobiaceae</taxon>
        <taxon>Rhizobium/Agrobacterium group</taxon>
        <taxon>Rhizobium</taxon>
        <taxon>Rhizobium johnstonii</taxon>
    </lineage>
</organism>
<feature type="chain" id="PRO_0000258564" description="Small ribosomal subunit protein uS10">
    <location>
        <begin position="1"/>
        <end position="102"/>
    </location>
</feature>
<reference key="1">
    <citation type="journal article" date="2006" name="Genome Biol.">
        <title>The genome of Rhizobium leguminosarum has recognizable core and accessory components.</title>
        <authorList>
            <person name="Young J.P.W."/>
            <person name="Crossman L.C."/>
            <person name="Johnston A.W.B."/>
            <person name="Thomson N.R."/>
            <person name="Ghazoui Z.F."/>
            <person name="Hull K.H."/>
            <person name="Wexler M."/>
            <person name="Curson A.R.J."/>
            <person name="Todd J.D."/>
            <person name="Poole P.S."/>
            <person name="Mauchline T.H."/>
            <person name="East A.K."/>
            <person name="Quail M.A."/>
            <person name="Churcher C."/>
            <person name="Arrowsmith C."/>
            <person name="Cherevach I."/>
            <person name="Chillingworth T."/>
            <person name="Clarke K."/>
            <person name="Cronin A."/>
            <person name="Davis P."/>
            <person name="Fraser A."/>
            <person name="Hance Z."/>
            <person name="Hauser H."/>
            <person name="Jagels K."/>
            <person name="Moule S."/>
            <person name="Mungall K."/>
            <person name="Norbertczak H."/>
            <person name="Rabbinowitsch E."/>
            <person name="Sanders M."/>
            <person name="Simmonds M."/>
            <person name="Whitehead S."/>
            <person name="Parkhill J."/>
        </authorList>
    </citation>
    <scope>NUCLEOTIDE SEQUENCE [LARGE SCALE GENOMIC DNA]</scope>
    <source>
        <strain>DSM 114642 / LMG 32736 / 3841</strain>
    </source>
</reference>
<sequence>MNGQNIRIRLKAFDHRILDASTREIVSTAKRTGASVRGPVPLPTRIEKFTVNRSPHIDKKSREQFEMRTHKRLLDIVDPTPQTVDALMKLDLAAGVDVEIKL</sequence>
<protein>
    <recommendedName>
        <fullName evidence="1">Small ribosomal subunit protein uS10</fullName>
    </recommendedName>
    <alternativeName>
        <fullName evidence="2">30S ribosomal protein S10</fullName>
    </alternativeName>
</protein>
<name>RS10_RHIJ3</name>